<keyword id="KW-0997">Cell inner membrane</keyword>
<keyword id="KW-1003">Cell membrane</keyword>
<keyword id="KW-0249">Electron transport</keyword>
<keyword id="KW-0472">Membrane</keyword>
<keyword id="KW-1185">Reference proteome</keyword>
<keyword id="KW-1278">Translocase</keyword>
<keyword id="KW-0812">Transmembrane</keyword>
<keyword id="KW-1133">Transmembrane helix</keyword>
<keyword id="KW-0813">Transport</keyword>
<dbReference type="EC" id="7.-.-.-" evidence="1"/>
<dbReference type="EMBL" id="AE014299">
    <property type="protein sequence ID" value="AAN55544.1"/>
    <property type="molecule type" value="Genomic_DNA"/>
</dbReference>
<dbReference type="RefSeq" id="NP_718100.1">
    <property type="nucleotide sequence ID" value="NC_004347.2"/>
</dbReference>
<dbReference type="RefSeq" id="WP_011072476.1">
    <property type="nucleotide sequence ID" value="NC_004347.2"/>
</dbReference>
<dbReference type="SMR" id="Q8EE76"/>
<dbReference type="STRING" id="211586.SO_2513"/>
<dbReference type="PaxDb" id="211586-SO_2513"/>
<dbReference type="KEGG" id="son:SO_2513"/>
<dbReference type="PATRIC" id="fig|211586.12.peg.2419"/>
<dbReference type="eggNOG" id="COG4660">
    <property type="taxonomic scope" value="Bacteria"/>
</dbReference>
<dbReference type="HOGENOM" id="CLU_046659_1_0_6"/>
<dbReference type="OrthoDB" id="9782945at2"/>
<dbReference type="PhylomeDB" id="Q8EE76"/>
<dbReference type="BioCyc" id="SONE211586:G1GMP-2304-MONOMER"/>
<dbReference type="Proteomes" id="UP000008186">
    <property type="component" value="Chromosome"/>
</dbReference>
<dbReference type="GO" id="GO:0005886">
    <property type="term" value="C:plasma membrane"/>
    <property type="evidence" value="ECO:0000318"/>
    <property type="project" value="GO_Central"/>
</dbReference>
<dbReference type="GO" id="GO:0022900">
    <property type="term" value="P:electron transport chain"/>
    <property type="evidence" value="ECO:0007669"/>
    <property type="project" value="UniProtKB-UniRule"/>
</dbReference>
<dbReference type="HAMAP" id="MF_00478">
    <property type="entry name" value="RsxE_RnfE"/>
    <property type="match status" value="1"/>
</dbReference>
<dbReference type="InterPro" id="IPR003667">
    <property type="entry name" value="NqrDE/RnfAE"/>
</dbReference>
<dbReference type="InterPro" id="IPR010968">
    <property type="entry name" value="RnfE"/>
</dbReference>
<dbReference type="NCBIfam" id="NF009070">
    <property type="entry name" value="PRK12405.1"/>
    <property type="match status" value="1"/>
</dbReference>
<dbReference type="NCBIfam" id="TIGR01948">
    <property type="entry name" value="rnfE"/>
    <property type="match status" value="1"/>
</dbReference>
<dbReference type="PANTHER" id="PTHR30586">
    <property type="entry name" value="ELECTRON TRANSPORT COMPLEX PROTEIN RNFE"/>
    <property type="match status" value="1"/>
</dbReference>
<dbReference type="PANTHER" id="PTHR30586:SF0">
    <property type="entry name" value="ION-TRANSLOCATING OXIDOREDUCTASE COMPLEX SUBUNIT E"/>
    <property type="match status" value="1"/>
</dbReference>
<dbReference type="Pfam" id="PF02508">
    <property type="entry name" value="Rnf-Nqr"/>
    <property type="match status" value="1"/>
</dbReference>
<dbReference type="PIRSF" id="PIRSF006102">
    <property type="entry name" value="NQR_DE"/>
    <property type="match status" value="1"/>
</dbReference>
<comment type="function">
    <text evidence="1">Part of a membrane-bound complex that couples electron transfer with translocation of ions across the membrane.</text>
</comment>
<comment type="subunit">
    <text evidence="1">The complex is composed of six subunits: RnfA, RnfB, RnfC, RnfD, RnfE and RnfG.</text>
</comment>
<comment type="subcellular location">
    <subcellularLocation>
        <location evidence="1">Cell inner membrane</location>
        <topology evidence="1">Multi-pass membrane protein</topology>
    </subcellularLocation>
</comment>
<comment type="similarity">
    <text evidence="1">Belongs to the NqrDE/RnfAE family.</text>
</comment>
<gene>
    <name evidence="1" type="primary">rnfE</name>
    <name type="ordered locus">SO_2513</name>
</gene>
<reference key="1">
    <citation type="journal article" date="2002" name="Nat. Biotechnol.">
        <title>Genome sequence of the dissimilatory metal ion-reducing bacterium Shewanella oneidensis.</title>
        <authorList>
            <person name="Heidelberg J.F."/>
            <person name="Paulsen I.T."/>
            <person name="Nelson K.E."/>
            <person name="Gaidos E.J."/>
            <person name="Nelson W.C."/>
            <person name="Read T.D."/>
            <person name="Eisen J.A."/>
            <person name="Seshadri R."/>
            <person name="Ward N.L."/>
            <person name="Methe B.A."/>
            <person name="Clayton R.A."/>
            <person name="Meyer T."/>
            <person name="Tsapin A."/>
            <person name="Scott J."/>
            <person name="Beanan M.J."/>
            <person name="Brinkac L.M."/>
            <person name="Daugherty S.C."/>
            <person name="DeBoy R.T."/>
            <person name="Dodson R.J."/>
            <person name="Durkin A.S."/>
            <person name="Haft D.H."/>
            <person name="Kolonay J.F."/>
            <person name="Madupu R."/>
            <person name="Peterson J.D."/>
            <person name="Umayam L.A."/>
            <person name="White O."/>
            <person name="Wolf A.M."/>
            <person name="Vamathevan J.J."/>
            <person name="Weidman J.F."/>
            <person name="Impraim M."/>
            <person name="Lee K."/>
            <person name="Berry K.J."/>
            <person name="Lee C."/>
            <person name="Mueller J."/>
            <person name="Khouri H.M."/>
            <person name="Gill J."/>
            <person name="Utterback T.R."/>
            <person name="McDonald L.A."/>
            <person name="Feldblyum T.V."/>
            <person name="Smith H.O."/>
            <person name="Venter J.C."/>
            <person name="Nealson K.H."/>
            <person name="Fraser C.M."/>
        </authorList>
    </citation>
    <scope>NUCLEOTIDE SEQUENCE [LARGE SCALE GENOMIC DNA]</scope>
    <source>
        <strain>ATCC 700550 / JCM 31522 / CIP 106686 / LMG 19005 / NCIMB 14063 / MR-1</strain>
    </source>
</reference>
<evidence type="ECO:0000255" key="1">
    <source>
        <dbReference type="HAMAP-Rule" id="MF_00478"/>
    </source>
</evidence>
<proteinExistence type="inferred from homology"/>
<organism>
    <name type="scientific">Shewanella oneidensis (strain ATCC 700550 / JCM 31522 / CIP 106686 / LMG 19005 / NCIMB 14063 / MR-1)</name>
    <dbReference type="NCBI Taxonomy" id="211586"/>
    <lineage>
        <taxon>Bacteria</taxon>
        <taxon>Pseudomonadati</taxon>
        <taxon>Pseudomonadota</taxon>
        <taxon>Gammaproteobacteria</taxon>
        <taxon>Alteromonadales</taxon>
        <taxon>Shewanellaceae</taxon>
        <taxon>Shewanella</taxon>
    </lineage>
</organism>
<name>RNFE_SHEON</name>
<feature type="chain" id="PRO_1000014103" description="Ion-translocating oxidoreductase complex subunit E">
    <location>
        <begin position="1"/>
        <end position="232"/>
    </location>
</feature>
<feature type="transmembrane region" description="Helical" evidence="1">
    <location>
        <begin position="39"/>
        <end position="59"/>
    </location>
</feature>
<feature type="transmembrane region" description="Helical" evidence="1">
    <location>
        <begin position="69"/>
        <end position="89"/>
    </location>
</feature>
<feature type="transmembrane region" description="Helical" evidence="1">
    <location>
        <begin position="93"/>
        <end position="113"/>
    </location>
</feature>
<feature type="transmembrane region" description="Helical" evidence="1">
    <location>
        <begin position="128"/>
        <end position="148"/>
    </location>
</feature>
<feature type="transmembrane region" description="Helical" evidence="1">
    <location>
        <begin position="182"/>
        <end position="202"/>
    </location>
</feature>
<accession>Q8EE76</accession>
<protein>
    <recommendedName>
        <fullName evidence="1">Ion-translocating oxidoreductase complex subunit E</fullName>
        <ecNumber evidence="1">7.-.-.-</ecNumber>
    </recommendedName>
    <alternativeName>
        <fullName evidence="1">Rnf electron transport complex subunit E</fullName>
    </alternativeName>
</protein>
<sequence length="232" mass="25161">MTNYREIAWQGLWKNNPGLVQRLGLCPLLAVTTTLTNALGLGIATMLVLIGSNVLISLVRDYVPKEIRIPVFVMIIAALVTAVQLLVNAYAYGLYMSLGIFLPLIVTNCIIIGRAEAFASRNNAFSSAFDGLMMGLGFTLVLVLLGATREILGQGTLFDGADQLLGPWAKALTFQVWQVDTSFLLAMLPPGAFIVMGLLIALKNVIDKKLRERQPETAVQPSVARARITKVS</sequence>